<proteinExistence type="inferred from homology"/>
<protein>
    <recommendedName>
        <fullName evidence="1">DNA mismatch repair protein MutS</fullName>
    </recommendedName>
</protein>
<feature type="chain" id="PRO_1000008097" description="DNA mismatch repair protein MutS">
    <location>
        <begin position="1"/>
        <end position="861"/>
    </location>
</feature>
<feature type="binding site" evidence="1">
    <location>
        <begin position="618"/>
        <end position="625"/>
    </location>
    <ligand>
        <name>ATP</name>
        <dbReference type="ChEBI" id="CHEBI:30616"/>
    </ligand>
</feature>
<reference key="1">
    <citation type="submission" date="2006-09" db="EMBL/GenBank/DDBJ databases">
        <title>Complete sequence of chromosome 1 of Shewanella sp. ANA-3.</title>
        <authorList>
            <person name="Copeland A."/>
            <person name="Lucas S."/>
            <person name="Lapidus A."/>
            <person name="Barry K."/>
            <person name="Detter J.C."/>
            <person name="Glavina del Rio T."/>
            <person name="Hammon N."/>
            <person name="Israni S."/>
            <person name="Dalin E."/>
            <person name="Tice H."/>
            <person name="Pitluck S."/>
            <person name="Chertkov O."/>
            <person name="Brettin T."/>
            <person name="Bruce D."/>
            <person name="Han C."/>
            <person name="Tapia R."/>
            <person name="Gilna P."/>
            <person name="Schmutz J."/>
            <person name="Larimer F."/>
            <person name="Land M."/>
            <person name="Hauser L."/>
            <person name="Kyrpides N."/>
            <person name="Kim E."/>
            <person name="Newman D."/>
            <person name="Salticov C."/>
            <person name="Konstantinidis K."/>
            <person name="Klappenback J."/>
            <person name="Tiedje J."/>
            <person name="Richardson P."/>
        </authorList>
    </citation>
    <scope>NUCLEOTIDE SEQUENCE [LARGE SCALE GENOMIC DNA]</scope>
    <source>
        <strain>ANA-3</strain>
    </source>
</reference>
<name>MUTS_SHESA</name>
<evidence type="ECO:0000255" key="1">
    <source>
        <dbReference type="HAMAP-Rule" id="MF_00096"/>
    </source>
</evidence>
<keyword id="KW-0067">ATP-binding</keyword>
<keyword id="KW-0227">DNA damage</keyword>
<keyword id="KW-0234">DNA repair</keyword>
<keyword id="KW-0238">DNA-binding</keyword>
<keyword id="KW-0547">Nucleotide-binding</keyword>
<sequence>MNPIDTDDLEKHTPMMRQYLTMKAEHHDMLLFYRMGDFYELFYDDAKRASELLGISLTARGKSGGDPIPMAGIPYHAVEGYLAKLVQIGQSVAICEQIGDPATSKGPVERKVVRIVTPGTLTDEALLQERQDNLLAAVYQGKVGFGYATLDVSSGRFVIAELETKESLEAELQRTNPVEILYSEDFGAMELLHHFKGKRRRPEWEFDYDTSIKLLLAQFGTKDLHGFGITDARLSLQAAGCLMQYVKDTQRTALPHINAITRFNQTDTIVLDAATRRNLELTQNLSGGRDNTLAAVLDNTATAMGSRMLQRWIHQPLRDHAQIFARQTAVNELLETTAHESLHDQLKALGDIERIMARLALRTARPRDFARLRQALNLLPQLQQSLAQLSAPHTVKLGQLLGEFPEEQQLLERAIVDNPPMLIRDGGVIREGYNAELDEWRGLSEGATDYLVQLEAREKERTGIATLKVGYNRVHGYYIEVSRLQSQQVPLNYQRRQTLKNMERYITPELKEYEEKVLSSQGKALALEKQLWDELFDLILPKLHELQAFARAAAELDVLSNFAERAETLGYTCPELSSEIGVKIEAGRHPVVERVSQTPFIANPVTLHNQRRMLIVTGPNMGGKSTYMRQVALITLMAHIGCFVPADRAIIGPIDRIFTRIGASDDLASGRSTFMVEMTETANILHNATAQSLVLMDEIGRGTSTYDGLSLAWSAAEYLAQQVGAMTLFATHYFELTQLPELMAGVYNVHLDAIEHEDTIAFMHAVQEGAASKSYGLQVAALAGVPARVIKAAKHKLHQLESRDHQVEGANVNGTRAPIQTLLALPEPVENPAVSKLKDINPDNLTPKQALDLLYELKRLS</sequence>
<organism>
    <name type="scientific">Shewanella sp. (strain ANA-3)</name>
    <dbReference type="NCBI Taxonomy" id="94122"/>
    <lineage>
        <taxon>Bacteria</taxon>
        <taxon>Pseudomonadati</taxon>
        <taxon>Pseudomonadota</taxon>
        <taxon>Gammaproteobacteria</taxon>
        <taxon>Alteromonadales</taxon>
        <taxon>Shewanellaceae</taxon>
        <taxon>Shewanella</taxon>
    </lineage>
</organism>
<dbReference type="EMBL" id="CP000469">
    <property type="protein sequence ID" value="ABK47360.1"/>
    <property type="molecule type" value="Genomic_DNA"/>
</dbReference>
<dbReference type="RefSeq" id="WP_011716224.1">
    <property type="nucleotide sequence ID" value="NC_008577.1"/>
</dbReference>
<dbReference type="SMR" id="A0KU91"/>
<dbReference type="STRING" id="94122.Shewana3_1125"/>
<dbReference type="KEGG" id="shn:Shewana3_1125"/>
<dbReference type="eggNOG" id="COG0249">
    <property type="taxonomic scope" value="Bacteria"/>
</dbReference>
<dbReference type="HOGENOM" id="CLU_002472_4_0_6"/>
<dbReference type="OrthoDB" id="9802448at2"/>
<dbReference type="Proteomes" id="UP000002589">
    <property type="component" value="Chromosome"/>
</dbReference>
<dbReference type="GO" id="GO:0005829">
    <property type="term" value="C:cytosol"/>
    <property type="evidence" value="ECO:0007669"/>
    <property type="project" value="TreeGrafter"/>
</dbReference>
<dbReference type="GO" id="GO:0005524">
    <property type="term" value="F:ATP binding"/>
    <property type="evidence" value="ECO:0007669"/>
    <property type="project" value="UniProtKB-UniRule"/>
</dbReference>
<dbReference type="GO" id="GO:0140664">
    <property type="term" value="F:ATP-dependent DNA damage sensor activity"/>
    <property type="evidence" value="ECO:0007669"/>
    <property type="project" value="InterPro"/>
</dbReference>
<dbReference type="GO" id="GO:0003684">
    <property type="term" value="F:damaged DNA binding"/>
    <property type="evidence" value="ECO:0007669"/>
    <property type="project" value="UniProtKB-UniRule"/>
</dbReference>
<dbReference type="GO" id="GO:0030983">
    <property type="term" value="F:mismatched DNA binding"/>
    <property type="evidence" value="ECO:0007669"/>
    <property type="project" value="InterPro"/>
</dbReference>
<dbReference type="GO" id="GO:0006298">
    <property type="term" value="P:mismatch repair"/>
    <property type="evidence" value="ECO:0007669"/>
    <property type="project" value="UniProtKB-UniRule"/>
</dbReference>
<dbReference type="CDD" id="cd03284">
    <property type="entry name" value="ABC_MutS1"/>
    <property type="match status" value="1"/>
</dbReference>
<dbReference type="FunFam" id="1.10.1420.10:FF:000002">
    <property type="entry name" value="DNA mismatch repair protein MutS"/>
    <property type="match status" value="1"/>
</dbReference>
<dbReference type="FunFam" id="3.30.420.110:FF:000001">
    <property type="entry name" value="DNA mismatch repair protein MutS"/>
    <property type="match status" value="1"/>
</dbReference>
<dbReference type="FunFam" id="3.40.1170.10:FF:000001">
    <property type="entry name" value="DNA mismatch repair protein MutS"/>
    <property type="match status" value="1"/>
</dbReference>
<dbReference type="FunFam" id="3.40.50.300:FF:000283">
    <property type="entry name" value="DNA mismatch repair protein MutS"/>
    <property type="match status" value="1"/>
</dbReference>
<dbReference type="Gene3D" id="1.10.1420.10">
    <property type="match status" value="2"/>
</dbReference>
<dbReference type="Gene3D" id="6.10.140.430">
    <property type="match status" value="1"/>
</dbReference>
<dbReference type="Gene3D" id="3.40.1170.10">
    <property type="entry name" value="DNA repair protein MutS, domain I"/>
    <property type="match status" value="1"/>
</dbReference>
<dbReference type="Gene3D" id="3.30.420.110">
    <property type="entry name" value="MutS, connector domain"/>
    <property type="match status" value="1"/>
</dbReference>
<dbReference type="Gene3D" id="3.40.50.300">
    <property type="entry name" value="P-loop containing nucleotide triphosphate hydrolases"/>
    <property type="match status" value="1"/>
</dbReference>
<dbReference type="HAMAP" id="MF_00096">
    <property type="entry name" value="MutS"/>
    <property type="match status" value="1"/>
</dbReference>
<dbReference type="InterPro" id="IPR005748">
    <property type="entry name" value="DNA_mismatch_repair_MutS"/>
</dbReference>
<dbReference type="InterPro" id="IPR007695">
    <property type="entry name" value="DNA_mismatch_repair_MutS-lik_N"/>
</dbReference>
<dbReference type="InterPro" id="IPR017261">
    <property type="entry name" value="DNA_mismatch_repair_MutS/MSH"/>
</dbReference>
<dbReference type="InterPro" id="IPR000432">
    <property type="entry name" value="DNA_mismatch_repair_MutS_C"/>
</dbReference>
<dbReference type="InterPro" id="IPR007861">
    <property type="entry name" value="DNA_mismatch_repair_MutS_clamp"/>
</dbReference>
<dbReference type="InterPro" id="IPR007696">
    <property type="entry name" value="DNA_mismatch_repair_MutS_core"/>
</dbReference>
<dbReference type="InterPro" id="IPR016151">
    <property type="entry name" value="DNA_mismatch_repair_MutS_N"/>
</dbReference>
<dbReference type="InterPro" id="IPR036187">
    <property type="entry name" value="DNA_mismatch_repair_MutS_sf"/>
</dbReference>
<dbReference type="InterPro" id="IPR007860">
    <property type="entry name" value="DNA_mmatch_repair_MutS_con_dom"/>
</dbReference>
<dbReference type="InterPro" id="IPR045076">
    <property type="entry name" value="MutS"/>
</dbReference>
<dbReference type="InterPro" id="IPR036678">
    <property type="entry name" value="MutS_con_dom_sf"/>
</dbReference>
<dbReference type="InterPro" id="IPR027417">
    <property type="entry name" value="P-loop_NTPase"/>
</dbReference>
<dbReference type="NCBIfam" id="TIGR01070">
    <property type="entry name" value="mutS1"/>
    <property type="match status" value="1"/>
</dbReference>
<dbReference type="NCBIfam" id="NF003810">
    <property type="entry name" value="PRK05399.1"/>
    <property type="match status" value="1"/>
</dbReference>
<dbReference type="PANTHER" id="PTHR11361:SF34">
    <property type="entry name" value="DNA MISMATCH REPAIR PROTEIN MSH1, MITOCHONDRIAL"/>
    <property type="match status" value="1"/>
</dbReference>
<dbReference type="PANTHER" id="PTHR11361">
    <property type="entry name" value="DNA MISMATCH REPAIR PROTEIN MUTS FAMILY MEMBER"/>
    <property type="match status" value="1"/>
</dbReference>
<dbReference type="Pfam" id="PF01624">
    <property type="entry name" value="MutS_I"/>
    <property type="match status" value="1"/>
</dbReference>
<dbReference type="Pfam" id="PF05188">
    <property type="entry name" value="MutS_II"/>
    <property type="match status" value="1"/>
</dbReference>
<dbReference type="Pfam" id="PF05192">
    <property type="entry name" value="MutS_III"/>
    <property type="match status" value="1"/>
</dbReference>
<dbReference type="Pfam" id="PF05190">
    <property type="entry name" value="MutS_IV"/>
    <property type="match status" value="1"/>
</dbReference>
<dbReference type="Pfam" id="PF00488">
    <property type="entry name" value="MutS_V"/>
    <property type="match status" value="1"/>
</dbReference>
<dbReference type="PIRSF" id="PIRSF037677">
    <property type="entry name" value="DNA_mis_repair_Msh6"/>
    <property type="match status" value="1"/>
</dbReference>
<dbReference type="SMART" id="SM00534">
    <property type="entry name" value="MUTSac"/>
    <property type="match status" value="1"/>
</dbReference>
<dbReference type="SMART" id="SM00533">
    <property type="entry name" value="MUTSd"/>
    <property type="match status" value="1"/>
</dbReference>
<dbReference type="SUPFAM" id="SSF55271">
    <property type="entry name" value="DNA repair protein MutS, domain I"/>
    <property type="match status" value="1"/>
</dbReference>
<dbReference type="SUPFAM" id="SSF53150">
    <property type="entry name" value="DNA repair protein MutS, domain II"/>
    <property type="match status" value="1"/>
</dbReference>
<dbReference type="SUPFAM" id="SSF48334">
    <property type="entry name" value="DNA repair protein MutS, domain III"/>
    <property type="match status" value="1"/>
</dbReference>
<dbReference type="SUPFAM" id="SSF52540">
    <property type="entry name" value="P-loop containing nucleoside triphosphate hydrolases"/>
    <property type="match status" value="1"/>
</dbReference>
<dbReference type="PROSITE" id="PS00486">
    <property type="entry name" value="DNA_MISMATCH_REPAIR_2"/>
    <property type="match status" value="1"/>
</dbReference>
<gene>
    <name evidence="1" type="primary">mutS</name>
    <name type="ordered locus">Shewana3_1125</name>
</gene>
<comment type="function">
    <text evidence="1">This protein is involved in the repair of mismatches in DNA. It is possible that it carries out the mismatch recognition step. This protein has a weak ATPase activity.</text>
</comment>
<comment type="similarity">
    <text evidence="1">Belongs to the DNA mismatch repair MutS family.</text>
</comment>
<accession>A0KU91</accession>